<feature type="signal peptide" evidence="2">
    <location>
        <begin position="1"/>
        <end position="19"/>
    </location>
</feature>
<feature type="chain" id="PRO_0000408637" description="Long chronological lifespan protein 2">
    <location>
        <begin position="20"/>
        <end position="125"/>
    </location>
</feature>
<reference key="1">
    <citation type="journal article" date="2009" name="Genome Res.">
        <title>Comparative genomics of protoploid Saccharomycetaceae.</title>
        <authorList>
            <consortium name="The Genolevures Consortium"/>
            <person name="Souciet J.-L."/>
            <person name="Dujon B."/>
            <person name="Gaillardin C."/>
            <person name="Johnston M."/>
            <person name="Baret P.V."/>
            <person name="Cliften P."/>
            <person name="Sherman D.J."/>
            <person name="Weissenbach J."/>
            <person name="Westhof E."/>
            <person name="Wincker P."/>
            <person name="Jubin C."/>
            <person name="Poulain J."/>
            <person name="Barbe V."/>
            <person name="Segurens B."/>
            <person name="Artiguenave F."/>
            <person name="Anthouard V."/>
            <person name="Vacherie B."/>
            <person name="Val M.-E."/>
            <person name="Fulton R.S."/>
            <person name="Minx P."/>
            <person name="Wilson R."/>
            <person name="Durrens P."/>
            <person name="Jean G."/>
            <person name="Marck C."/>
            <person name="Martin T."/>
            <person name="Nikolski M."/>
            <person name="Rolland T."/>
            <person name="Seret M.-L."/>
            <person name="Casaregola S."/>
            <person name="Despons L."/>
            <person name="Fairhead C."/>
            <person name="Fischer G."/>
            <person name="Lafontaine I."/>
            <person name="Leh V."/>
            <person name="Lemaire M."/>
            <person name="de Montigny J."/>
            <person name="Neuveglise C."/>
            <person name="Thierry A."/>
            <person name="Blanc-Lenfle I."/>
            <person name="Bleykasten C."/>
            <person name="Diffels J."/>
            <person name="Fritsch E."/>
            <person name="Frangeul L."/>
            <person name="Goeffon A."/>
            <person name="Jauniaux N."/>
            <person name="Kachouri-Lafond R."/>
            <person name="Payen C."/>
            <person name="Potier S."/>
            <person name="Pribylova L."/>
            <person name="Ozanne C."/>
            <person name="Richard G.-F."/>
            <person name="Sacerdot C."/>
            <person name="Straub M.-L."/>
            <person name="Talla E."/>
        </authorList>
    </citation>
    <scope>NUCLEOTIDE SEQUENCE [LARGE SCALE GENOMIC DNA]</scope>
    <source>
        <strain>ATCC 2623 / CBS 732 / BCRC 21506 / NBRC 1130 / NCYC 568 / NRRL Y-229</strain>
    </source>
</reference>
<accession>C5DVG0</accession>
<name>LCL2_ZYGRC</name>
<comment type="function">
    <text evidence="1">Probable component of the endoplasmic reticulum-associated degradation (ERAD) pathway.</text>
</comment>
<comment type="similarity">
    <text evidence="3">Belongs to the LCL2 family.</text>
</comment>
<evidence type="ECO:0000250" key="1"/>
<evidence type="ECO:0000255" key="2"/>
<evidence type="ECO:0000305" key="3"/>
<sequence length="125" mass="13941">MNCACRVIAVCLLLVQVSGFLFNFNQDPPTPPQPYEDKFLNSGCEGYLCPDTLECVSHVKECPCPFPKSQLKCTLPNNQYICISKPATHDEKLNAIYDDPAKGPKAKNKGIRDCGWVLEAYKDQV</sequence>
<dbReference type="EMBL" id="CU928176">
    <property type="protein sequence ID" value="CAR27779.1"/>
    <property type="molecule type" value="Genomic_DNA"/>
</dbReference>
<dbReference type="RefSeq" id="XP_002496712.1">
    <property type="nucleotide sequence ID" value="XM_002496667.1"/>
</dbReference>
<dbReference type="SMR" id="C5DVG0"/>
<dbReference type="FunCoup" id="C5DVG0">
    <property type="interactions" value="29"/>
</dbReference>
<dbReference type="STRING" id="559307.C5DVG0"/>
<dbReference type="GeneID" id="8203966"/>
<dbReference type="KEGG" id="zro:ZYRO0D06446g"/>
<dbReference type="HOGENOM" id="CLU_142363_1_0_1"/>
<dbReference type="InParanoid" id="C5DVG0"/>
<dbReference type="Proteomes" id="UP000008536">
    <property type="component" value="Chromosome D"/>
</dbReference>
<dbReference type="GO" id="GO:0036503">
    <property type="term" value="P:ERAD pathway"/>
    <property type="evidence" value="ECO:0007669"/>
    <property type="project" value="TreeGrafter"/>
</dbReference>
<dbReference type="CDD" id="cd23996">
    <property type="entry name" value="LCL2-like"/>
    <property type="match status" value="1"/>
</dbReference>
<dbReference type="InterPro" id="IPR034543">
    <property type="entry name" value="LCL2"/>
</dbReference>
<dbReference type="PANTHER" id="PTHR38425">
    <property type="entry name" value="LONG CHRONOLOGICAL LIFESPAN PROTEIN 2"/>
    <property type="match status" value="1"/>
</dbReference>
<dbReference type="PANTHER" id="PTHR38425:SF1">
    <property type="entry name" value="LONG CHRONOLOGICAL LIFESPAN PROTEIN 2"/>
    <property type="match status" value="1"/>
</dbReference>
<keyword id="KW-1185">Reference proteome</keyword>
<keyword id="KW-0732">Signal</keyword>
<gene>
    <name type="primary">LCL2</name>
    <name type="ordered locus">ZYRO0D06446g</name>
</gene>
<organism>
    <name type="scientific">Zygosaccharomyces rouxii (strain ATCC 2623 / CBS 732 / NBRC 1130 / NCYC 568 / NRRL Y-229)</name>
    <dbReference type="NCBI Taxonomy" id="559307"/>
    <lineage>
        <taxon>Eukaryota</taxon>
        <taxon>Fungi</taxon>
        <taxon>Dikarya</taxon>
        <taxon>Ascomycota</taxon>
        <taxon>Saccharomycotina</taxon>
        <taxon>Saccharomycetes</taxon>
        <taxon>Saccharomycetales</taxon>
        <taxon>Saccharomycetaceae</taxon>
        <taxon>Zygosaccharomyces</taxon>
    </lineage>
</organism>
<protein>
    <recommendedName>
        <fullName>Long chronological lifespan protein 2</fullName>
    </recommendedName>
</protein>
<proteinExistence type="inferred from homology"/>